<gene>
    <name type="primary">SPC110</name>
    <name type="ordered locus">KLTH0F16500g</name>
</gene>
<dbReference type="EMBL" id="CU928170">
    <property type="protein sequence ID" value="CAR24465.1"/>
    <property type="molecule type" value="Genomic_DNA"/>
</dbReference>
<dbReference type="RefSeq" id="XP_002554902.1">
    <property type="nucleotide sequence ID" value="XM_002554856.1"/>
</dbReference>
<dbReference type="SMR" id="C5DJH6"/>
<dbReference type="FunCoup" id="C5DJH6">
    <property type="interactions" value="343"/>
</dbReference>
<dbReference type="GeneID" id="8293135"/>
<dbReference type="KEGG" id="lth:KLTH0F16500g"/>
<dbReference type="eggNOG" id="ENOG502QUTQ">
    <property type="taxonomic scope" value="Eukaryota"/>
</dbReference>
<dbReference type="HOGENOM" id="CLU_329279_0_0_1"/>
<dbReference type="InParanoid" id="C5DJH6"/>
<dbReference type="OMA" id="MENASNK"/>
<dbReference type="OrthoDB" id="10255522at2759"/>
<dbReference type="Proteomes" id="UP000002036">
    <property type="component" value="Chromosome F"/>
</dbReference>
<dbReference type="GO" id="GO:0005737">
    <property type="term" value="C:cytoplasm"/>
    <property type="evidence" value="ECO:0007669"/>
    <property type="project" value="UniProtKB-KW"/>
</dbReference>
<dbReference type="GO" id="GO:0005634">
    <property type="term" value="C:nucleus"/>
    <property type="evidence" value="ECO:0007669"/>
    <property type="project" value="UniProtKB-SubCell"/>
</dbReference>
<dbReference type="GO" id="GO:0005816">
    <property type="term" value="C:spindle pole body"/>
    <property type="evidence" value="ECO:0007669"/>
    <property type="project" value="UniProtKB-SubCell"/>
</dbReference>
<dbReference type="Gene3D" id="6.10.310.10">
    <property type="match status" value="1"/>
</dbReference>
<dbReference type="InterPro" id="IPR040593">
    <property type="entry name" value="Spc110_C"/>
</dbReference>
<dbReference type="PANTHER" id="PTHR23159">
    <property type="entry name" value="CENTROSOMAL PROTEIN 2"/>
    <property type="match status" value="1"/>
</dbReference>
<dbReference type="PANTHER" id="PTHR23159:SF31">
    <property type="entry name" value="CENTROSOME-ASSOCIATED PROTEIN CEP250 ISOFORM X1"/>
    <property type="match status" value="1"/>
</dbReference>
<dbReference type="Pfam" id="PF18520">
    <property type="entry name" value="Spc110_C"/>
    <property type="match status" value="1"/>
</dbReference>
<sequence>MSDSPGTPNGKDTIRNYEFTPIGYVKERETSVPAVANSDSRKRSSPYRSPAADDDGPPQKAFRADDTLNSTRIFNDSSFDDTLPSQSVMNSVRINGVSDLHDNGIEEENGGASNPLKEQQETLYKLNVENYNLRVKCNSLLKFLNNVTDEGELRKNLAVIDELQEWKGKYQELKKAYRSLQLKFDQSEHKDQADLEQDARSNEKEMRSLQKKLQEYQEQVTQSKKLVESLENKLGNSASGSKEIKEQFEHKSSLLQERIDKLESELAAKDKELEINRNEIKNLQNDLQKANHDSSSLADQKLQTRSKEIENLNNRLKSAVREREAAEHLLKESQNALRSLRAELSTLRQESDRKLDDLSVAKEKSERVLKERLEERTSQSERLQQRANSLEQNAAELSSRLQLRDQRIKALEDEARELQKMNQRIQDLNDGKDSEKLQAQNQKLDGLRSEIERIKNEKEELERDNDKLKKRIVAQATKSPALKANSRKSLEKDAEAEKLRSRVRELEQELRVSKDALNKLRHNYRRDTDELKLQLEGAETDQVSAKRSLEKEIDRLKFEIDSLRESRKDEIAIMENRFNLLRRENEQLSGQGGSQLASLQKSLTEKQKEINELVQRCSDNTMDRLKLNRELAKAQEAESEGKREASKLSARLEFITKEFVKYKEAKTQGGEAGADRLNEKWSEKYQHMKQRLLNELKVLQEENLELERATLERKGSAGSGTYNVGMSSLQDQLDYYRLKYHREVAHTNDLNVMNDYLNRVLRASAQHVRLDILKLENEAPPDAFPEFTYRGRLRFKTVALFVLAAVRVQRVSLKLRWDSQRLNYLQKKIALEQDKITW</sequence>
<reference key="1">
    <citation type="journal article" date="2009" name="Genome Res.">
        <title>Comparative genomics of protoploid Saccharomycetaceae.</title>
        <authorList>
            <consortium name="The Genolevures Consortium"/>
            <person name="Souciet J.-L."/>
            <person name="Dujon B."/>
            <person name="Gaillardin C."/>
            <person name="Johnston M."/>
            <person name="Baret P.V."/>
            <person name="Cliften P."/>
            <person name="Sherman D.J."/>
            <person name="Weissenbach J."/>
            <person name="Westhof E."/>
            <person name="Wincker P."/>
            <person name="Jubin C."/>
            <person name="Poulain J."/>
            <person name="Barbe V."/>
            <person name="Segurens B."/>
            <person name="Artiguenave F."/>
            <person name="Anthouard V."/>
            <person name="Vacherie B."/>
            <person name="Val M.-E."/>
            <person name="Fulton R.S."/>
            <person name="Minx P."/>
            <person name="Wilson R."/>
            <person name="Durrens P."/>
            <person name="Jean G."/>
            <person name="Marck C."/>
            <person name="Martin T."/>
            <person name="Nikolski M."/>
            <person name="Rolland T."/>
            <person name="Seret M.-L."/>
            <person name="Casaregola S."/>
            <person name="Despons L."/>
            <person name="Fairhead C."/>
            <person name="Fischer G."/>
            <person name="Lafontaine I."/>
            <person name="Leh V."/>
            <person name="Lemaire M."/>
            <person name="de Montigny J."/>
            <person name="Neuveglise C."/>
            <person name="Thierry A."/>
            <person name="Blanc-Lenfle I."/>
            <person name="Bleykasten C."/>
            <person name="Diffels J."/>
            <person name="Fritsch E."/>
            <person name="Frangeul L."/>
            <person name="Goeffon A."/>
            <person name="Jauniaux N."/>
            <person name="Kachouri-Lafond R."/>
            <person name="Payen C."/>
            <person name="Potier S."/>
            <person name="Pribylova L."/>
            <person name="Ozanne C."/>
            <person name="Richard G.-F."/>
            <person name="Sacerdot C."/>
            <person name="Straub M.-L."/>
            <person name="Talla E."/>
        </authorList>
    </citation>
    <scope>NUCLEOTIDE SEQUENCE [LARGE SCALE GENOMIC DNA]</scope>
    <source>
        <strain>ATCC 56472 / CBS 6340 / NRRL Y-8284</strain>
    </source>
</reference>
<proteinExistence type="inferred from homology"/>
<feature type="chain" id="PRO_0000409201" description="Spindle pole body component 110">
    <location>
        <begin position="1"/>
        <end position="838"/>
    </location>
</feature>
<feature type="region of interest" description="Disordered" evidence="3">
    <location>
        <begin position="1"/>
        <end position="67"/>
    </location>
</feature>
<feature type="region of interest" description="Disordered" evidence="3">
    <location>
        <begin position="187"/>
        <end position="209"/>
    </location>
</feature>
<feature type="region of interest" description="Disordered" evidence="3">
    <location>
        <begin position="287"/>
        <end position="310"/>
    </location>
</feature>
<feature type="coiled-coil region" evidence="2">
    <location>
        <begin position="163"/>
        <end position="644"/>
    </location>
</feature>
<feature type="coiled-coil region" evidence="2">
    <location>
        <begin position="682"/>
        <end position="709"/>
    </location>
</feature>
<feature type="compositionally biased region" description="Polar residues" evidence="3">
    <location>
        <begin position="287"/>
        <end position="303"/>
    </location>
</feature>
<keyword id="KW-0175">Coiled coil</keyword>
<keyword id="KW-0963">Cytoplasm</keyword>
<keyword id="KW-0206">Cytoskeleton</keyword>
<keyword id="KW-0539">Nucleus</keyword>
<keyword id="KW-1185">Reference proteome</keyword>
<protein>
    <recommendedName>
        <fullName>Spindle pole body component 110</fullName>
    </recommendedName>
    <alternativeName>
        <fullName>Spindle pole body spacer protein SPC110</fullName>
    </alternativeName>
</protein>
<comment type="function">
    <text evidence="1">Component of the spindle pole body (SPB) required for the proper execution of spindle pole body (SPB) duplication. Potential role in cross-linking filaments or anchoring other molecules. It is essential for growth (By similarity).</text>
</comment>
<comment type="subunit">
    <text evidence="1">Homodimer.</text>
</comment>
<comment type="subcellular location">
    <subcellularLocation>
        <location evidence="1">Nucleus</location>
    </subcellularLocation>
    <subcellularLocation>
        <location evidence="1">Cytoplasm</location>
        <location evidence="1">Cytoskeleton</location>
        <location evidence="1">Microtubule organizing center</location>
        <location evidence="1">Spindle pole body</location>
    </subcellularLocation>
    <text evidence="1">Tightly associated with the nucleus. It is present in a granular pattern that excludes the nucleolus.</text>
</comment>
<comment type="similarity">
    <text evidence="4">Belongs to the SPC110 family.</text>
</comment>
<organism>
    <name type="scientific">Lachancea thermotolerans (strain ATCC 56472 / CBS 6340 / NRRL Y-8284)</name>
    <name type="common">Yeast</name>
    <name type="synonym">Kluyveromyces thermotolerans</name>
    <dbReference type="NCBI Taxonomy" id="559295"/>
    <lineage>
        <taxon>Eukaryota</taxon>
        <taxon>Fungi</taxon>
        <taxon>Dikarya</taxon>
        <taxon>Ascomycota</taxon>
        <taxon>Saccharomycotina</taxon>
        <taxon>Saccharomycetes</taxon>
        <taxon>Saccharomycetales</taxon>
        <taxon>Saccharomycetaceae</taxon>
        <taxon>Lachancea</taxon>
    </lineage>
</organism>
<name>SP110_LACTC</name>
<accession>C5DJH6</accession>
<evidence type="ECO:0000250" key="1"/>
<evidence type="ECO:0000255" key="2"/>
<evidence type="ECO:0000256" key="3">
    <source>
        <dbReference type="SAM" id="MobiDB-lite"/>
    </source>
</evidence>
<evidence type="ECO:0000305" key="4"/>